<accession>Q9JLI3</accession>
<accession>Q3U495</accession>
<accession>Q9ERK2</accession>
<accession>Q9ERK3</accession>
<accession>Q9QZV6</accession>
<accession>Q9QZV7</accession>
<dbReference type="EC" id="3.4.24.11"/>
<dbReference type="EMBL" id="AF157105">
    <property type="protein sequence ID" value="AAF13152.1"/>
    <property type="molecule type" value="mRNA"/>
</dbReference>
<dbReference type="EMBL" id="AF157106">
    <property type="protein sequence ID" value="AAF13153.1"/>
    <property type="molecule type" value="mRNA"/>
</dbReference>
<dbReference type="EMBL" id="AF176569">
    <property type="protein sequence ID" value="AAF69247.1"/>
    <property type="molecule type" value="mRNA"/>
</dbReference>
<dbReference type="EMBL" id="AF302075">
    <property type="protein sequence ID" value="AAG18446.1"/>
    <property type="molecule type" value="mRNA"/>
</dbReference>
<dbReference type="EMBL" id="AF302076">
    <property type="protein sequence ID" value="AAG18447.1"/>
    <property type="molecule type" value="mRNA"/>
</dbReference>
<dbReference type="EMBL" id="AF302077">
    <property type="protein sequence ID" value="AAG18448.1"/>
    <property type="molecule type" value="mRNA"/>
</dbReference>
<dbReference type="EMBL" id="AK154366">
    <property type="protein sequence ID" value="BAE32538.1"/>
    <property type="status" value="ALT_INIT"/>
    <property type="molecule type" value="mRNA"/>
</dbReference>
<dbReference type="RefSeq" id="NP_038811.2">
    <property type="nucleotide sequence ID" value="NM_013783.2"/>
</dbReference>
<dbReference type="SMR" id="Q9JLI3"/>
<dbReference type="FunCoup" id="Q9JLI3">
    <property type="interactions" value="93"/>
</dbReference>
<dbReference type="STRING" id="10090.ENSMUSP00000131753"/>
<dbReference type="MEROPS" id="M13.008"/>
<dbReference type="GlyCosmos" id="Q9JLI3">
    <property type="glycosylation" value="5 sites, No reported glycans"/>
</dbReference>
<dbReference type="GlyGen" id="Q9JLI3">
    <property type="glycosylation" value="5 sites"/>
</dbReference>
<dbReference type="iPTMnet" id="Q9JLI3"/>
<dbReference type="PhosphoSitePlus" id="Q9JLI3"/>
<dbReference type="SwissPalm" id="Q9JLI3"/>
<dbReference type="PaxDb" id="10090-ENSMUSP00000101259"/>
<dbReference type="ProteomicsDB" id="291470">
    <molecule id="Q9JLI3-1"/>
</dbReference>
<dbReference type="ProteomicsDB" id="291471">
    <molecule id="Q9JLI3-2"/>
</dbReference>
<dbReference type="ProteomicsDB" id="291472">
    <molecule id="Q9JLI3-3"/>
</dbReference>
<dbReference type="DNASU" id="27390"/>
<dbReference type="GeneID" id="27390"/>
<dbReference type="KEGG" id="mmu:27390"/>
<dbReference type="UCSC" id="uc008wcg.1">
    <molecule id="Q9JLI3-1"/>
    <property type="organism name" value="mouse"/>
</dbReference>
<dbReference type="AGR" id="MGI:1351603"/>
<dbReference type="CTD" id="79258"/>
<dbReference type="MGI" id="MGI:1351603">
    <property type="gene designation" value="Mmel1"/>
</dbReference>
<dbReference type="eggNOG" id="KOG3624">
    <property type="taxonomic scope" value="Eukaryota"/>
</dbReference>
<dbReference type="InParanoid" id="Q9JLI3"/>
<dbReference type="OrthoDB" id="6502247at2759"/>
<dbReference type="BRENDA" id="3.4.24.B14">
    <property type="organism ID" value="3474"/>
</dbReference>
<dbReference type="BioGRID-ORCS" id="27390">
    <property type="hits" value="6 hits in 78 CRISPR screens"/>
</dbReference>
<dbReference type="ChiTaRS" id="Mmel1">
    <property type="organism name" value="mouse"/>
</dbReference>
<dbReference type="PRO" id="PR:Q9JLI3"/>
<dbReference type="Proteomes" id="UP000000589">
    <property type="component" value="Unplaced"/>
</dbReference>
<dbReference type="RNAct" id="Q9JLI3">
    <property type="molecule type" value="protein"/>
</dbReference>
<dbReference type="GO" id="GO:0005783">
    <property type="term" value="C:endoplasmic reticulum"/>
    <property type="evidence" value="ECO:0000314"/>
    <property type="project" value="MGI"/>
</dbReference>
<dbReference type="GO" id="GO:0005615">
    <property type="term" value="C:extracellular space"/>
    <property type="evidence" value="ECO:0000304"/>
    <property type="project" value="MGI"/>
</dbReference>
<dbReference type="GO" id="GO:0005794">
    <property type="term" value="C:Golgi apparatus"/>
    <property type="evidence" value="ECO:0000314"/>
    <property type="project" value="MGI"/>
</dbReference>
<dbReference type="GO" id="GO:0016020">
    <property type="term" value="C:membrane"/>
    <property type="evidence" value="ECO:0007669"/>
    <property type="project" value="UniProtKB-SubCell"/>
</dbReference>
<dbReference type="GO" id="GO:0046872">
    <property type="term" value="F:metal ion binding"/>
    <property type="evidence" value="ECO:0007669"/>
    <property type="project" value="UniProtKB-KW"/>
</dbReference>
<dbReference type="GO" id="GO:0004222">
    <property type="term" value="F:metalloendopeptidase activity"/>
    <property type="evidence" value="ECO:0000250"/>
    <property type="project" value="MGI"/>
</dbReference>
<dbReference type="GO" id="GO:0006508">
    <property type="term" value="P:proteolysis"/>
    <property type="evidence" value="ECO:0007669"/>
    <property type="project" value="UniProtKB-KW"/>
</dbReference>
<dbReference type="CDD" id="cd08662">
    <property type="entry name" value="M13"/>
    <property type="match status" value="1"/>
</dbReference>
<dbReference type="Gene3D" id="3.40.390.10">
    <property type="entry name" value="Collagenase (Catalytic Domain)"/>
    <property type="match status" value="1"/>
</dbReference>
<dbReference type="Gene3D" id="1.10.1380.10">
    <property type="entry name" value="Neutral endopeptidase , domain2"/>
    <property type="match status" value="1"/>
</dbReference>
<dbReference type="InterPro" id="IPR024079">
    <property type="entry name" value="MetalloPept_cat_dom_sf"/>
</dbReference>
<dbReference type="InterPro" id="IPR000718">
    <property type="entry name" value="Peptidase_M13"/>
</dbReference>
<dbReference type="InterPro" id="IPR018497">
    <property type="entry name" value="Peptidase_M13_C"/>
</dbReference>
<dbReference type="InterPro" id="IPR042089">
    <property type="entry name" value="Peptidase_M13_dom_2"/>
</dbReference>
<dbReference type="InterPro" id="IPR008753">
    <property type="entry name" value="Peptidase_M13_N"/>
</dbReference>
<dbReference type="PANTHER" id="PTHR11733:SF141">
    <property type="entry name" value="MEMBRANE METALLO-ENDOPEPTIDASE-LIKE 1"/>
    <property type="match status" value="1"/>
</dbReference>
<dbReference type="PANTHER" id="PTHR11733">
    <property type="entry name" value="ZINC METALLOPROTEASE FAMILY M13 NEPRILYSIN-RELATED"/>
    <property type="match status" value="1"/>
</dbReference>
<dbReference type="Pfam" id="PF01431">
    <property type="entry name" value="Peptidase_M13"/>
    <property type="match status" value="1"/>
</dbReference>
<dbReference type="Pfam" id="PF05649">
    <property type="entry name" value="Peptidase_M13_N"/>
    <property type="match status" value="1"/>
</dbReference>
<dbReference type="PRINTS" id="PR00786">
    <property type="entry name" value="NEPRILYSIN"/>
</dbReference>
<dbReference type="SUPFAM" id="SSF55486">
    <property type="entry name" value="Metalloproteases ('zincins'), catalytic domain"/>
    <property type="match status" value="1"/>
</dbReference>
<dbReference type="PROSITE" id="PS51885">
    <property type="entry name" value="NEPRILYSIN"/>
    <property type="match status" value="1"/>
</dbReference>
<dbReference type="PROSITE" id="PS00142">
    <property type="entry name" value="ZINC_PROTEASE"/>
    <property type="match status" value="1"/>
</dbReference>
<proteinExistence type="evidence at protein level"/>
<feature type="chain" id="PRO_0000248417" description="Membrane metallo-endopeptidase-like 1">
    <location>
        <begin position="1"/>
        <end position="765"/>
    </location>
</feature>
<feature type="chain" id="PRO_0000248418" description="Membrane metallo-endopeptidase-like 1, soluble form" evidence="11">
    <location>
        <begin position="63"/>
        <end position="765"/>
    </location>
</feature>
<feature type="topological domain" description="Cytoplasmic" evidence="2">
    <location>
        <begin position="1"/>
        <end position="19"/>
    </location>
</feature>
<feature type="transmembrane region" description="Helical; Signal-anchor for type II membrane protein" evidence="2">
    <location>
        <begin position="20"/>
        <end position="40"/>
    </location>
</feature>
<feature type="topological domain" description="Lumenal" evidence="2">
    <location>
        <begin position="41"/>
        <end position="765"/>
    </location>
</feature>
<feature type="domain" description="Peptidase M13" evidence="3">
    <location>
        <begin position="74"/>
        <end position="765"/>
    </location>
</feature>
<feature type="coiled-coil region" evidence="2">
    <location>
        <begin position="523"/>
        <end position="549"/>
    </location>
</feature>
<feature type="active site" evidence="3 4">
    <location>
        <position position="600"/>
    </location>
</feature>
<feature type="active site" description="Proton donor" evidence="3">
    <location>
        <position position="666"/>
    </location>
</feature>
<feature type="binding site" evidence="1">
    <location>
        <position position="121"/>
    </location>
    <ligand>
        <name>a peptide</name>
        <dbReference type="ChEBI" id="CHEBI:60466"/>
        <note>substrate</note>
    </ligand>
</feature>
<feature type="binding site" evidence="3 4">
    <location>
        <position position="599"/>
    </location>
    <ligand>
        <name>Zn(2+)</name>
        <dbReference type="ChEBI" id="CHEBI:29105"/>
        <note>catalytic</note>
    </ligand>
</feature>
<feature type="binding site" evidence="3 4">
    <location>
        <position position="603"/>
    </location>
    <ligand>
        <name>Zn(2+)</name>
        <dbReference type="ChEBI" id="CHEBI:29105"/>
        <note>catalytic</note>
    </ligand>
</feature>
<feature type="binding site" evidence="3">
    <location>
        <position position="662"/>
    </location>
    <ligand>
        <name>Zn(2+)</name>
        <dbReference type="ChEBI" id="CHEBI:29105"/>
        <note>catalytic</note>
    </ligand>
</feature>
<feature type="site" description="Cleavage" evidence="11">
    <location>
        <begin position="62"/>
        <end position="63"/>
    </location>
</feature>
<feature type="glycosylation site" description="N-linked (GlcNAc...) asparagine" evidence="2">
    <location>
        <position position="163"/>
    </location>
</feature>
<feature type="glycosylation site" description="N-linked (GlcNAc...) asparagine" evidence="2">
    <location>
        <position position="279"/>
    </location>
</feature>
<feature type="glycosylation site" description="N-linked (GlcNAc...) asparagine" evidence="2">
    <location>
        <position position="303"/>
    </location>
</feature>
<feature type="glycosylation site" description="N-linked (GlcNAc...) asparagine" evidence="2">
    <location>
        <position position="336"/>
    </location>
</feature>
<feature type="glycosylation site" description="N-linked (GlcNAc...) asparagine" evidence="2">
    <location>
        <position position="694"/>
    </location>
</feature>
<feature type="disulfide bond" evidence="3">
    <location>
        <begin position="75"/>
        <end position="80"/>
    </location>
</feature>
<feature type="disulfide bond" evidence="3">
    <location>
        <begin position="98"/>
        <end position="750"/>
    </location>
</feature>
<feature type="disulfide bond" evidence="3">
    <location>
        <begin position="106"/>
        <end position="710"/>
    </location>
</feature>
<feature type="disulfide bond" evidence="3">
    <location>
        <begin position="161"/>
        <end position="425"/>
    </location>
</feature>
<feature type="disulfide bond" evidence="3">
    <location>
        <begin position="636"/>
        <end position="762"/>
    </location>
</feature>
<feature type="splice variant" id="VSP_020290" description="In isoform 2 and isoform 3." evidence="9 10">
    <location>
        <begin position="41"/>
        <end position="63"/>
    </location>
</feature>
<feature type="splice variant" id="VSP_020291" description="In isoform 3." evidence="11">
    <original>F</original>
    <variation>FGLKDRVSLCSPGCPGTHSVDQAGLELGNPPASDSRVL</variation>
    <location>
        <position position="330"/>
    </location>
</feature>
<feature type="mutagenesis site" description="Abolishes formation the soluble form." evidence="6">
    <original>KR</original>
    <variation>NG</variation>
    <location>
        <begin position="62"/>
        <end position="63"/>
    </location>
</feature>
<feature type="sequence conflict" description="In Ref. 1; AAF13152/AAF13153." evidence="11" ref="1">
    <original>M</original>
    <variation>L</variation>
    <location>
        <position position="189"/>
    </location>
</feature>
<feature type="sequence conflict" description="In Ref. 1; AAF13152/AAF13153." evidence="11" ref="1">
    <original>L</original>
    <variation>P</variation>
    <location>
        <position position="264"/>
    </location>
</feature>
<feature type="sequence conflict" description="In Ref. 1; AAF13152/AAF13153." evidence="11" ref="1">
    <original>T</original>
    <variation>S</variation>
    <location>
        <position position="659"/>
    </location>
</feature>
<evidence type="ECO:0000250" key="1"/>
<evidence type="ECO:0000255" key="2"/>
<evidence type="ECO:0000255" key="3">
    <source>
        <dbReference type="PROSITE-ProRule" id="PRU01233"/>
    </source>
</evidence>
<evidence type="ECO:0000255" key="4">
    <source>
        <dbReference type="PROSITE-ProRule" id="PRU10095"/>
    </source>
</evidence>
<evidence type="ECO:0000269" key="5">
    <source>
    </source>
</evidence>
<evidence type="ECO:0000269" key="6">
    <source>
    </source>
</evidence>
<evidence type="ECO:0000269" key="7">
    <source>
    </source>
</evidence>
<evidence type="ECO:0000269" key="8">
    <source>
    </source>
</evidence>
<evidence type="ECO:0000303" key="9">
    <source>
    </source>
</evidence>
<evidence type="ECO:0000303" key="10">
    <source>
    </source>
</evidence>
<evidence type="ECO:0000305" key="11"/>
<organism>
    <name type="scientific">Mus musculus</name>
    <name type="common">Mouse</name>
    <dbReference type="NCBI Taxonomy" id="10090"/>
    <lineage>
        <taxon>Eukaryota</taxon>
        <taxon>Metazoa</taxon>
        <taxon>Chordata</taxon>
        <taxon>Craniata</taxon>
        <taxon>Vertebrata</taxon>
        <taxon>Euteleostomi</taxon>
        <taxon>Mammalia</taxon>
        <taxon>Eutheria</taxon>
        <taxon>Euarchontoglires</taxon>
        <taxon>Glires</taxon>
        <taxon>Rodentia</taxon>
        <taxon>Myomorpha</taxon>
        <taxon>Muroidea</taxon>
        <taxon>Muridae</taxon>
        <taxon>Murinae</taxon>
        <taxon>Mus</taxon>
        <taxon>Mus</taxon>
    </lineage>
</organism>
<sequence>MVERAGWCRKKSPGFVEYGLMVLLLLLLGAIVTLGVFYSIGKQLPLLTSLLHFSWDERTVVKRALRDSSLKSDICTTPSCVIAAARILENMDQSRNPCENFYQYACGGWLRHHVIPETNSRYSVFDILRDELEVILKGVLEDSTSQHRPAVEKAKTLYRSCMNQSVIEKRDSEPLLSVLKMVGGWPVAMDKWNETMGLKWELERQLAVLNSQFNRRVLIDLFIWNDDQNSSRHVIYIDQPTLGMPSREYYFQEDNNHKVRKAYLEFMTSVATMLRKDQNLSKESAMVREEMAEVLELETHLANATVPQEKRHDVTALYHRMDLMELQERFGLKGFNWTLFIQNVLSSVEVELFPDEEVVVYGIPYLENLEDIIDSYSARTMQNYLVWRLVLDRIGSLSQRFKEARVDYRKALYGTTVEEVRWRECVSYVNSNMESAVGSLYIKRAFSKDSKSTVRELIEKIRSVFVDNLDELNWMDEESKKKAQEKAMNIREQIGYPDYILEDNNKHLDEEYSSLTFYEDLYFENGLQNLKNNAQRSLKKLREKVDQNLWIIGAAVVNAFYSPNRNQIVFPAGILQPPFFSKDQPQSLNFGGIGMVIGHEITHGFDDNGRNFDKNGNMLDWWSNFSARHFQQQSQCMIYQYGNFSWELADNQNVNGFSTLGENIADNGGVRQAYKAYLRWLADGGKDQRLPGLNLTYAQLFFINYAQVWCGSYRPEFAVQSIKTDVHSPLKYRVLGSLQNLPGFSEAFHCPRGSPMHPMKRCRIW</sequence>
<keyword id="KW-0025">Alternative splicing</keyword>
<keyword id="KW-0175">Coiled coil</keyword>
<keyword id="KW-1015">Disulfide bond</keyword>
<keyword id="KW-0325">Glycoprotein</keyword>
<keyword id="KW-0378">Hydrolase</keyword>
<keyword id="KW-0472">Membrane</keyword>
<keyword id="KW-0479">Metal-binding</keyword>
<keyword id="KW-0482">Metalloprotease</keyword>
<keyword id="KW-0645">Protease</keyword>
<keyword id="KW-1185">Reference proteome</keyword>
<keyword id="KW-0964">Secreted</keyword>
<keyword id="KW-0735">Signal-anchor</keyword>
<keyword id="KW-0812">Transmembrane</keyword>
<keyword id="KW-1133">Transmembrane helix</keyword>
<keyword id="KW-0862">Zinc</keyword>
<protein>
    <recommendedName>
        <fullName>Membrane metallo-endopeptidase-like 1</fullName>
        <ecNumber>3.4.24.11</ecNumber>
    </recommendedName>
    <alternativeName>
        <fullName>NEP2(m)</fullName>
    </alternativeName>
    <alternativeName>
        <fullName>Neprilysin II</fullName>
        <shortName>NEPII</shortName>
    </alternativeName>
    <alternativeName>
        <fullName>Neprilysin-2</fullName>
        <shortName>NEP2</shortName>
        <shortName>NL2</shortName>
    </alternativeName>
    <alternativeName>
        <fullName>Neprilysin-like 1</fullName>
        <shortName>NL-1</shortName>
    </alternativeName>
    <alternativeName>
        <fullName>Neprilysin-like peptidase</fullName>
        <shortName>NEPLP</shortName>
    </alternativeName>
    <alternativeName>
        <fullName>Soluble secreted endopeptidase</fullName>
    </alternativeName>
    <component>
        <recommendedName>
            <fullName>Membrane metallo-endopeptidase-like 1, soluble form</fullName>
        </recommendedName>
        <alternativeName>
            <fullName>Neprilysin-2 secreted</fullName>
            <shortName>NEP2(s)</shortName>
        </alternativeName>
    </component>
</protein>
<gene>
    <name type="primary">Mmel1</name>
    <name type="synonym">Nep2</name>
    <name type="synonym">Nl1</name>
    <name type="synonym">Sep</name>
</gene>
<name>MMEL1_MOUSE</name>
<reference key="1">
    <citation type="journal article" date="1999" name="J. Biol. Chem.">
        <title>Molecular identification and characterization of novel membrane-bound metalloprotease, the soluble secreted form of which hydrolyzes a variety of vasoactive peptides.</title>
        <authorList>
            <person name="Ikeda K."/>
            <person name="Emoto N."/>
            <person name="Raharjo S.B."/>
            <person name="Nurhantari Y."/>
            <person name="Saiki K."/>
            <person name="Yokoyama M."/>
            <person name="Matsuo M."/>
        </authorList>
    </citation>
    <scope>NUCLEOTIDE SEQUENCE [MRNA] (ISOFORMS 1 AND 2)</scope>
    <scope>FUNCTION</scope>
    <scope>GLYCOSYLATION</scope>
    <scope>SUBCELLULAR LOCATION</scope>
    <scope>TISSUE SPECIFICITY</scope>
    <source>
        <tissue>Testis</tissue>
    </source>
</reference>
<reference key="2">
    <citation type="journal article" date="2000" name="Biochem. J.">
        <title>Molecular cloning and biochemical characterization of a new mouse testis soluble zinc-metallopeptidase of the neprilysin family.</title>
        <authorList>
            <person name="Ghaddar G."/>
            <person name="Ruchon A.F."/>
            <person name="Carpentier M."/>
            <person name="Marcinkiewicz M."/>
            <person name="Seidah N.G."/>
            <person name="Crine P."/>
            <person name="DesGroseillers L."/>
            <person name="Boileau G."/>
        </authorList>
    </citation>
    <scope>NUCLEOTIDE SEQUENCE [MRNA] (ISOFORM 1)</scope>
    <scope>GLYCOSYLATION</scope>
    <scope>BIOPHYSICOCHEMICAL PROPERTIES</scope>
    <scope>MUTAGENESIS OF 62-LYS-ARG-63</scope>
    <source>
        <tissue>Testis</tissue>
    </source>
</reference>
<reference key="3">
    <citation type="journal article" date="2001" name="J. Biol. Chem.">
        <title>Neprilysin degrades both amyloid beta peptides 1-40 and 1-42 most rapidly and efficiently among thiorphan- and phosphoramidon-sensitive endopeptidases.</title>
        <authorList>
            <person name="Shirotani K."/>
            <person name="Tsubuki S."/>
            <person name="Iwata N."/>
            <person name="Takaki Y."/>
            <person name="Harigaya W."/>
            <person name="Maruyama K."/>
            <person name="Kiryu-Seo S."/>
            <person name="Kiyama H."/>
            <person name="Iwata H."/>
            <person name="Tomita T."/>
            <person name="Iwatsubo T."/>
            <person name="Saido T.C."/>
        </authorList>
    </citation>
    <scope>NUCLEOTIDE SEQUENCE [MRNA] (ISOFORMS 1 AND 2)</scope>
    <scope>FUNCTION</scope>
    <scope>ACTIVITY REGULATION</scope>
</reference>
<reference key="4">
    <citation type="journal article" date="2005" name="Science">
        <title>The transcriptional landscape of the mammalian genome.</title>
        <authorList>
            <person name="Carninci P."/>
            <person name="Kasukawa T."/>
            <person name="Katayama S."/>
            <person name="Gough J."/>
            <person name="Frith M.C."/>
            <person name="Maeda N."/>
            <person name="Oyama R."/>
            <person name="Ravasi T."/>
            <person name="Lenhard B."/>
            <person name="Wells C."/>
            <person name="Kodzius R."/>
            <person name="Shimokawa K."/>
            <person name="Bajic V.B."/>
            <person name="Brenner S.E."/>
            <person name="Batalov S."/>
            <person name="Forrest A.R."/>
            <person name="Zavolan M."/>
            <person name="Davis M.J."/>
            <person name="Wilming L.G."/>
            <person name="Aidinis V."/>
            <person name="Allen J.E."/>
            <person name="Ambesi-Impiombato A."/>
            <person name="Apweiler R."/>
            <person name="Aturaliya R.N."/>
            <person name="Bailey T.L."/>
            <person name="Bansal M."/>
            <person name="Baxter L."/>
            <person name="Beisel K.W."/>
            <person name="Bersano T."/>
            <person name="Bono H."/>
            <person name="Chalk A.M."/>
            <person name="Chiu K.P."/>
            <person name="Choudhary V."/>
            <person name="Christoffels A."/>
            <person name="Clutterbuck D.R."/>
            <person name="Crowe M.L."/>
            <person name="Dalla E."/>
            <person name="Dalrymple B.P."/>
            <person name="de Bono B."/>
            <person name="Della Gatta G."/>
            <person name="di Bernardo D."/>
            <person name="Down T."/>
            <person name="Engstrom P."/>
            <person name="Fagiolini M."/>
            <person name="Faulkner G."/>
            <person name="Fletcher C.F."/>
            <person name="Fukushima T."/>
            <person name="Furuno M."/>
            <person name="Futaki S."/>
            <person name="Gariboldi M."/>
            <person name="Georgii-Hemming P."/>
            <person name="Gingeras T.R."/>
            <person name="Gojobori T."/>
            <person name="Green R.E."/>
            <person name="Gustincich S."/>
            <person name="Harbers M."/>
            <person name="Hayashi Y."/>
            <person name="Hensch T.K."/>
            <person name="Hirokawa N."/>
            <person name="Hill D."/>
            <person name="Huminiecki L."/>
            <person name="Iacono M."/>
            <person name="Ikeo K."/>
            <person name="Iwama A."/>
            <person name="Ishikawa T."/>
            <person name="Jakt M."/>
            <person name="Kanapin A."/>
            <person name="Katoh M."/>
            <person name="Kawasawa Y."/>
            <person name="Kelso J."/>
            <person name="Kitamura H."/>
            <person name="Kitano H."/>
            <person name="Kollias G."/>
            <person name="Krishnan S.P."/>
            <person name="Kruger A."/>
            <person name="Kummerfeld S.K."/>
            <person name="Kurochkin I.V."/>
            <person name="Lareau L.F."/>
            <person name="Lazarevic D."/>
            <person name="Lipovich L."/>
            <person name="Liu J."/>
            <person name="Liuni S."/>
            <person name="McWilliam S."/>
            <person name="Madan Babu M."/>
            <person name="Madera M."/>
            <person name="Marchionni L."/>
            <person name="Matsuda H."/>
            <person name="Matsuzawa S."/>
            <person name="Miki H."/>
            <person name="Mignone F."/>
            <person name="Miyake S."/>
            <person name="Morris K."/>
            <person name="Mottagui-Tabar S."/>
            <person name="Mulder N."/>
            <person name="Nakano N."/>
            <person name="Nakauchi H."/>
            <person name="Ng P."/>
            <person name="Nilsson R."/>
            <person name="Nishiguchi S."/>
            <person name="Nishikawa S."/>
            <person name="Nori F."/>
            <person name="Ohara O."/>
            <person name="Okazaki Y."/>
            <person name="Orlando V."/>
            <person name="Pang K.C."/>
            <person name="Pavan W.J."/>
            <person name="Pavesi G."/>
            <person name="Pesole G."/>
            <person name="Petrovsky N."/>
            <person name="Piazza S."/>
            <person name="Reed J."/>
            <person name="Reid J.F."/>
            <person name="Ring B.Z."/>
            <person name="Ringwald M."/>
            <person name="Rost B."/>
            <person name="Ruan Y."/>
            <person name="Salzberg S.L."/>
            <person name="Sandelin A."/>
            <person name="Schneider C."/>
            <person name="Schoenbach C."/>
            <person name="Sekiguchi K."/>
            <person name="Semple C.A."/>
            <person name="Seno S."/>
            <person name="Sessa L."/>
            <person name="Sheng Y."/>
            <person name="Shibata Y."/>
            <person name="Shimada H."/>
            <person name="Shimada K."/>
            <person name="Silva D."/>
            <person name="Sinclair B."/>
            <person name="Sperling S."/>
            <person name="Stupka E."/>
            <person name="Sugiura K."/>
            <person name="Sultana R."/>
            <person name="Takenaka Y."/>
            <person name="Taki K."/>
            <person name="Tammoja K."/>
            <person name="Tan S.L."/>
            <person name="Tang S."/>
            <person name="Taylor M.S."/>
            <person name="Tegner J."/>
            <person name="Teichmann S.A."/>
            <person name="Ueda H.R."/>
            <person name="van Nimwegen E."/>
            <person name="Verardo R."/>
            <person name="Wei C.L."/>
            <person name="Yagi K."/>
            <person name="Yamanishi H."/>
            <person name="Zabarovsky E."/>
            <person name="Zhu S."/>
            <person name="Zimmer A."/>
            <person name="Hide W."/>
            <person name="Bult C."/>
            <person name="Grimmond S.M."/>
            <person name="Teasdale R.D."/>
            <person name="Liu E.T."/>
            <person name="Brusic V."/>
            <person name="Quackenbush J."/>
            <person name="Wahlestedt C."/>
            <person name="Mattick J.S."/>
            <person name="Hume D.A."/>
            <person name="Kai C."/>
            <person name="Sasaki D."/>
            <person name="Tomaru Y."/>
            <person name="Fukuda S."/>
            <person name="Kanamori-Katayama M."/>
            <person name="Suzuki M."/>
            <person name="Aoki J."/>
            <person name="Arakawa T."/>
            <person name="Iida J."/>
            <person name="Imamura K."/>
            <person name="Itoh M."/>
            <person name="Kato T."/>
            <person name="Kawaji H."/>
            <person name="Kawagashira N."/>
            <person name="Kawashima T."/>
            <person name="Kojima M."/>
            <person name="Kondo S."/>
            <person name="Konno H."/>
            <person name="Nakano K."/>
            <person name="Ninomiya N."/>
            <person name="Nishio T."/>
            <person name="Okada M."/>
            <person name="Plessy C."/>
            <person name="Shibata K."/>
            <person name="Shiraki T."/>
            <person name="Suzuki S."/>
            <person name="Tagami M."/>
            <person name="Waki K."/>
            <person name="Watahiki A."/>
            <person name="Okamura-Oho Y."/>
            <person name="Suzuki H."/>
            <person name="Kawai J."/>
            <person name="Hayashizaki Y."/>
        </authorList>
    </citation>
    <scope>NUCLEOTIDE SEQUENCE [LARGE SCALE MRNA] OF 64-765</scope>
    <source>
        <strain>NOD</strain>
    </source>
</reference>
<reference key="5">
    <citation type="journal article" date="2004" name="Mol. Cell. Biol.">
        <title>Reduced fertility in male mice deficient in the zinc metallopeptidase NL1.</title>
        <authorList>
            <person name="Carpentier M."/>
            <person name="Guillemette C."/>
            <person name="Bailey J.L."/>
            <person name="Boileau G."/>
            <person name="Jeannotte L."/>
            <person name="DesGroseillers L."/>
            <person name="Charron J."/>
        </authorList>
    </citation>
    <scope>DISRUPTION PHENOTYPE</scope>
</reference>
<comment type="function">
    <text evidence="5 7">Metalloprotease involved in sperm function, possibly by modulating the processes of fertilization and early embryonic development. Degrades a broad variety of small peptides with a preference for peptides shorter than 3 kDa containing neutral bulky aliphatic or aromatic amino acid residues. Shares the same substrate specificity with MME and cleaves peptides at the same amide bond.</text>
</comment>
<comment type="catalytic activity">
    <reaction>
        <text>Preferential cleavage of polypeptides between hydrophobic residues, particularly with Phe or Tyr at P1'.</text>
        <dbReference type="EC" id="3.4.24.11"/>
    </reaction>
</comment>
<comment type="cofactor">
    <cofactor evidence="1">
        <name>Zn(2+)</name>
        <dbReference type="ChEBI" id="CHEBI:29105"/>
    </cofactor>
    <text evidence="1">Binds 1 zinc ion per subunit.</text>
</comment>
<comment type="activity regulation">
    <text evidence="7">Inhibited by thiorphan and phosphoramidon.</text>
</comment>
<comment type="biophysicochemical properties">
    <kinetics>
        <KM evidence="6">18 uM for D-Ala(2)-Leu(5)-enkephalin</KM>
    </kinetics>
</comment>
<comment type="subcellular location">
    <subcellularLocation>
        <location evidence="5">Membrane</location>
        <topology evidence="5">Single-pass type II membrane protein</topology>
    </subcellularLocation>
    <subcellularLocation>
        <location evidence="5">Secreted</location>
    </subcellularLocation>
    <text>A secreted form produced by proteolytic cleavage also exists.</text>
</comment>
<comment type="alternative products">
    <event type="alternative splicing"/>
    <isoform>
        <id>Q9JLI3-1</id>
        <name>1</name>
        <name>Beta</name>
        <sequence type="displayed"/>
    </isoform>
    <isoform>
        <id>Q9JLI3-2</id>
        <name>2</name>
        <name>Alpha</name>
        <name>Delta</name>
        <sequence type="described" ref="VSP_020290"/>
    </isoform>
    <isoform>
        <id>Q9JLI3-3</id>
        <name>3</name>
        <name>Gamma</name>
        <sequence type="described" ref="VSP_020290 VSP_020291"/>
    </isoform>
</comment>
<comment type="tissue specificity">
    <text evidence="5">Highly expressed in testis. Also expressed in ovary. Weakly or not expressed in brain, lung, heart, liver, kidney, adrenal gland and intestine.</text>
</comment>
<comment type="PTM">
    <text evidence="5 6">N-glycosylated.</text>
</comment>
<comment type="disruption phenotype">
    <text evidence="8">Mice are viable and develop normally. However, males produce smaller litters, indicating specific male fertility problems.</text>
</comment>
<comment type="similarity">
    <text evidence="3 11">Belongs to the peptidase M13 family.</text>
</comment>
<comment type="sequence caution" evidence="11">
    <conflict type="erroneous initiation">
        <sequence resource="EMBL-CDS" id="BAE32538"/>
    </conflict>
</comment>